<feature type="chain" id="PRO_0000103654" description="Uncharacterized MFS-type transporter Rv0037c">
    <location>
        <begin position="1"/>
        <end position="441"/>
    </location>
</feature>
<feature type="transmembrane region" description="Helical" evidence="1">
    <location>
        <begin position="68"/>
        <end position="88"/>
    </location>
</feature>
<feature type="transmembrane region" description="Helical" evidence="1">
    <location>
        <begin position="110"/>
        <end position="130"/>
    </location>
</feature>
<feature type="transmembrane region" description="Helical" evidence="1">
    <location>
        <begin position="131"/>
        <end position="151"/>
    </location>
</feature>
<feature type="transmembrane region" description="Helical" evidence="1">
    <location>
        <begin position="164"/>
        <end position="184"/>
    </location>
</feature>
<feature type="transmembrane region" description="Helical" evidence="1">
    <location>
        <begin position="194"/>
        <end position="214"/>
    </location>
</feature>
<feature type="transmembrane region" description="Helical" evidence="1">
    <location>
        <begin position="229"/>
        <end position="246"/>
    </location>
</feature>
<feature type="transmembrane region" description="Helical" evidence="1">
    <location>
        <begin position="260"/>
        <end position="280"/>
    </location>
</feature>
<feature type="transmembrane region" description="Helical" evidence="1">
    <location>
        <begin position="287"/>
        <end position="307"/>
    </location>
</feature>
<feature type="transmembrane region" description="Helical" evidence="1">
    <location>
        <begin position="337"/>
        <end position="357"/>
    </location>
</feature>
<feature type="transmembrane region" description="Helical" evidence="1">
    <location>
        <begin position="384"/>
        <end position="404"/>
    </location>
</feature>
<feature type="transmembrane region" description="Helical" evidence="1">
    <location>
        <begin position="412"/>
        <end position="432"/>
    </location>
</feature>
<sequence length="441" mass="45866">MPRVEVGLVIHSRMHARAPVDVWRSVRSLPDFWRLLQVRVASQFGDGLFQAGLAGALLFNPDRAADPMAIAGAFAVLFLPYSLLGPFAGALMDRWDRRWVLVGANTGRLALIAGVGTILAVGAGDVPLLVGALVANGLARFVASGLSAALPHVVPREQVVTMNSVAIASGAVSAFLGANFMLLPRWLLGSGDEGASAIVFLVAIPVSIALLWSLRFGPRVLGPDDTERAIHGSAVYAVVTGWLHGARTVVQLPTVAAGLSGLAAHRMVVGINSLLILLLVRHVTARAVGGLGTALLFFAATGLGAFLANVLTPTAIRRWGRYATANGALAAAATIQVAAAGLLVPVMVVCGFLLGVAGQVVKLCADSAMQMDVDDALRGHVFAVQDALFWVSYILSITVAAALIPEHGHAPVFVLFGSAIYLAGLVVHTIVGRRGQPVIGR</sequence>
<comment type="subcellular location">
    <subcellularLocation>
        <location evidence="2">Cell membrane</location>
        <topology evidence="2">Multi-pass membrane protein</topology>
    </subcellularLocation>
</comment>
<comment type="similarity">
    <text evidence="2">Belongs to the major facilitator superfamily.</text>
</comment>
<gene>
    <name type="ordered locus">Rv0037c</name>
    <name type="ORF">MTCY10H4.37c</name>
</gene>
<protein>
    <recommendedName>
        <fullName>Uncharacterized MFS-type transporter Rv0037c</fullName>
    </recommendedName>
</protein>
<keyword id="KW-1003">Cell membrane</keyword>
<keyword id="KW-0472">Membrane</keyword>
<keyword id="KW-1185">Reference proteome</keyword>
<keyword id="KW-0812">Transmembrane</keyword>
<keyword id="KW-1133">Transmembrane helix</keyword>
<keyword id="KW-0813">Transport</keyword>
<accession>P9WJY1</accession>
<accession>L0T278</accession>
<accession>P0A5C1</accession>
<accession>P71607</accession>
<name>Y037_MYCTU</name>
<proteinExistence type="evidence at protein level"/>
<organism>
    <name type="scientific">Mycobacterium tuberculosis (strain ATCC 25618 / H37Rv)</name>
    <dbReference type="NCBI Taxonomy" id="83332"/>
    <lineage>
        <taxon>Bacteria</taxon>
        <taxon>Bacillati</taxon>
        <taxon>Actinomycetota</taxon>
        <taxon>Actinomycetes</taxon>
        <taxon>Mycobacteriales</taxon>
        <taxon>Mycobacteriaceae</taxon>
        <taxon>Mycobacterium</taxon>
        <taxon>Mycobacterium tuberculosis complex</taxon>
    </lineage>
</organism>
<evidence type="ECO:0000255" key="1"/>
<evidence type="ECO:0000305" key="2"/>
<reference key="1">
    <citation type="journal article" date="1998" name="Nature">
        <title>Deciphering the biology of Mycobacterium tuberculosis from the complete genome sequence.</title>
        <authorList>
            <person name="Cole S.T."/>
            <person name="Brosch R."/>
            <person name="Parkhill J."/>
            <person name="Garnier T."/>
            <person name="Churcher C.M."/>
            <person name="Harris D.E."/>
            <person name="Gordon S.V."/>
            <person name="Eiglmeier K."/>
            <person name="Gas S."/>
            <person name="Barry C.E. III"/>
            <person name="Tekaia F."/>
            <person name="Badcock K."/>
            <person name="Basham D."/>
            <person name="Brown D."/>
            <person name="Chillingworth T."/>
            <person name="Connor R."/>
            <person name="Davies R.M."/>
            <person name="Devlin K."/>
            <person name="Feltwell T."/>
            <person name="Gentles S."/>
            <person name="Hamlin N."/>
            <person name="Holroyd S."/>
            <person name="Hornsby T."/>
            <person name="Jagels K."/>
            <person name="Krogh A."/>
            <person name="McLean J."/>
            <person name="Moule S."/>
            <person name="Murphy L.D."/>
            <person name="Oliver S."/>
            <person name="Osborne J."/>
            <person name="Quail M.A."/>
            <person name="Rajandream M.A."/>
            <person name="Rogers J."/>
            <person name="Rutter S."/>
            <person name="Seeger K."/>
            <person name="Skelton S."/>
            <person name="Squares S."/>
            <person name="Squares R."/>
            <person name="Sulston J.E."/>
            <person name="Taylor K."/>
            <person name="Whitehead S."/>
            <person name="Barrell B.G."/>
        </authorList>
    </citation>
    <scope>NUCLEOTIDE SEQUENCE [LARGE SCALE GENOMIC DNA]</scope>
    <source>
        <strain>ATCC 25618 / H37Rv</strain>
    </source>
</reference>
<reference key="2">
    <citation type="journal article" date="2011" name="Mol. Cell. Proteomics">
        <title>Proteogenomic analysis of Mycobacterium tuberculosis by high resolution mass spectrometry.</title>
        <authorList>
            <person name="Kelkar D.S."/>
            <person name="Kumar D."/>
            <person name="Kumar P."/>
            <person name="Balakrishnan L."/>
            <person name="Muthusamy B."/>
            <person name="Yadav A.K."/>
            <person name="Shrivastava P."/>
            <person name="Marimuthu A."/>
            <person name="Anand S."/>
            <person name="Sundaram H."/>
            <person name="Kingsbury R."/>
            <person name="Harsha H.C."/>
            <person name="Nair B."/>
            <person name="Prasad T.S."/>
            <person name="Chauhan D.S."/>
            <person name="Katoch K."/>
            <person name="Katoch V.M."/>
            <person name="Kumar P."/>
            <person name="Chaerkady R."/>
            <person name="Ramachandran S."/>
            <person name="Dash D."/>
            <person name="Pandey A."/>
        </authorList>
    </citation>
    <scope>IDENTIFICATION BY MASS SPECTROMETRY [LARGE SCALE ANALYSIS]</scope>
    <source>
        <strain>ATCC 25618 / H37Rv</strain>
    </source>
</reference>
<dbReference type="EMBL" id="AL123456">
    <property type="protein sequence ID" value="CCP42759.1"/>
    <property type="molecule type" value="Genomic_DNA"/>
</dbReference>
<dbReference type="PIR" id="C70702">
    <property type="entry name" value="C70702"/>
</dbReference>
<dbReference type="RefSeq" id="NP_214551.1">
    <property type="nucleotide sequence ID" value="NC_000962.3"/>
</dbReference>
<dbReference type="RefSeq" id="WP_003400431.1">
    <property type="nucleotide sequence ID" value="NZ_NVQJ01000005.1"/>
</dbReference>
<dbReference type="SMR" id="P9WJY1"/>
<dbReference type="STRING" id="83332.Rv0037c"/>
<dbReference type="PaxDb" id="83332-Rv0037c"/>
<dbReference type="DNASU" id="887042"/>
<dbReference type="GeneID" id="887042"/>
<dbReference type="KEGG" id="mtu:Rv0037c"/>
<dbReference type="KEGG" id="mtv:RVBD_0037c"/>
<dbReference type="PATRIC" id="fig|83332.111.peg.42"/>
<dbReference type="TubercuList" id="Rv0037c"/>
<dbReference type="eggNOG" id="COG2814">
    <property type="taxonomic scope" value="Bacteria"/>
</dbReference>
<dbReference type="InParanoid" id="P9WJY1"/>
<dbReference type="OrthoDB" id="3688258at2"/>
<dbReference type="PhylomeDB" id="P9WJY1"/>
<dbReference type="Proteomes" id="UP000001584">
    <property type="component" value="Chromosome"/>
</dbReference>
<dbReference type="GO" id="GO:0005886">
    <property type="term" value="C:plasma membrane"/>
    <property type="evidence" value="ECO:0000318"/>
    <property type="project" value="GO_Central"/>
</dbReference>
<dbReference type="GO" id="GO:0015562">
    <property type="term" value="F:efflux transmembrane transporter activity"/>
    <property type="evidence" value="ECO:0000318"/>
    <property type="project" value="GO_Central"/>
</dbReference>
<dbReference type="GO" id="GO:0046677">
    <property type="term" value="P:response to antibiotic"/>
    <property type="evidence" value="ECO:0000318"/>
    <property type="project" value="GO_Central"/>
</dbReference>
<dbReference type="CDD" id="cd06173">
    <property type="entry name" value="MFS_MefA_like"/>
    <property type="match status" value="1"/>
</dbReference>
<dbReference type="Gene3D" id="1.20.1250.20">
    <property type="entry name" value="MFS general substrate transporter like domains"/>
    <property type="match status" value="1"/>
</dbReference>
<dbReference type="InterPro" id="IPR011701">
    <property type="entry name" value="MFS"/>
</dbReference>
<dbReference type="InterPro" id="IPR036259">
    <property type="entry name" value="MFS_trans_sf"/>
</dbReference>
<dbReference type="PANTHER" id="PTHR23513">
    <property type="entry name" value="INTEGRAL MEMBRANE EFFLUX PROTEIN-RELATED"/>
    <property type="match status" value="1"/>
</dbReference>
<dbReference type="PANTHER" id="PTHR23513:SF17">
    <property type="entry name" value="MEMBRANE PROTEIN"/>
    <property type="match status" value="1"/>
</dbReference>
<dbReference type="Pfam" id="PF07690">
    <property type="entry name" value="MFS_1"/>
    <property type="match status" value="1"/>
</dbReference>
<dbReference type="SUPFAM" id="SSF103473">
    <property type="entry name" value="MFS general substrate transporter"/>
    <property type="match status" value="1"/>
</dbReference>